<keyword id="KW-0227">DNA damage</keyword>
<keyword id="KW-0233">DNA recombination</keyword>
<keyword id="KW-0234">DNA repair</keyword>
<sequence length="234" mass="26685">MHHHWHRSFILHRRSYSETSLILDLLTENEGRISLIAKGALRPRSALKGYLQPFTPLLLRWSGKSAIKTLCGAEPISIAVPLTGIFLYSGLYVNELLSRLLLPNIDYRALFFDYLDCLEALASAQDTSERALRRFELALLTHLGYGVDFLHCVETGEPVVAQMTYRYQHEIGFIRSPEDDSLGFTGHQLQSLAKGAFYDQETLKAAKRFTRIALKPHLGHRPLNSRSLFRKFNL</sequence>
<protein>
    <recommendedName>
        <fullName evidence="1">DNA repair protein RecO</fullName>
    </recommendedName>
    <alternativeName>
        <fullName evidence="1">Recombination protein O</fullName>
    </alternativeName>
</protein>
<reference key="1">
    <citation type="journal article" date="2009" name="Proc. Natl. Acad. Sci. U.S.A.">
        <title>Hamiltonella defensa, genome evolution of protective bacterial endosymbiont from pathogenic ancestors.</title>
        <authorList>
            <person name="Degnan P.H."/>
            <person name="Yu Y."/>
            <person name="Sisneros N."/>
            <person name="Wing R.A."/>
            <person name="Moran N.A."/>
        </authorList>
    </citation>
    <scope>NUCLEOTIDE SEQUENCE [LARGE SCALE GENOMIC DNA]</scope>
    <source>
        <strain>5AT</strain>
    </source>
</reference>
<evidence type="ECO:0000255" key="1">
    <source>
        <dbReference type="HAMAP-Rule" id="MF_00201"/>
    </source>
</evidence>
<feature type="chain" id="PRO_1000204105" description="DNA repair protein RecO">
    <location>
        <begin position="1"/>
        <end position="234"/>
    </location>
</feature>
<organism>
    <name type="scientific">Hamiltonella defensa subsp. Acyrthosiphon pisum (strain 5AT)</name>
    <dbReference type="NCBI Taxonomy" id="572265"/>
    <lineage>
        <taxon>Bacteria</taxon>
        <taxon>Pseudomonadati</taxon>
        <taxon>Pseudomonadota</taxon>
        <taxon>Gammaproteobacteria</taxon>
        <taxon>Enterobacterales</taxon>
        <taxon>Enterobacteriaceae</taxon>
        <taxon>aphid secondary symbionts</taxon>
        <taxon>Candidatus Hamiltonella</taxon>
    </lineage>
</organism>
<proteinExistence type="inferred from homology"/>
<dbReference type="EMBL" id="CP001277">
    <property type="protein sequence ID" value="ACQ67288.1"/>
    <property type="molecule type" value="Genomic_DNA"/>
</dbReference>
<dbReference type="RefSeq" id="WP_015873113.1">
    <property type="nucleotide sequence ID" value="NC_012751.1"/>
</dbReference>
<dbReference type="SMR" id="C4K3Z5"/>
<dbReference type="STRING" id="572265.HDEF_0534"/>
<dbReference type="GeneID" id="66260416"/>
<dbReference type="KEGG" id="hde:HDEF_0534"/>
<dbReference type="eggNOG" id="COG1381">
    <property type="taxonomic scope" value="Bacteria"/>
</dbReference>
<dbReference type="HOGENOM" id="CLU_066645_1_0_6"/>
<dbReference type="Proteomes" id="UP000002334">
    <property type="component" value="Chromosome"/>
</dbReference>
<dbReference type="GO" id="GO:0043590">
    <property type="term" value="C:bacterial nucleoid"/>
    <property type="evidence" value="ECO:0007669"/>
    <property type="project" value="TreeGrafter"/>
</dbReference>
<dbReference type="GO" id="GO:0006310">
    <property type="term" value="P:DNA recombination"/>
    <property type="evidence" value="ECO:0007669"/>
    <property type="project" value="UniProtKB-UniRule"/>
</dbReference>
<dbReference type="GO" id="GO:0006302">
    <property type="term" value="P:double-strand break repair"/>
    <property type="evidence" value="ECO:0007669"/>
    <property type="project" value="TreeGrafter"/>
</dbReference>
<dbReference type="Gene3D" id="2.40.50.140">
    <property type="entry name" value="Nucleic acid-binding proteins"/>
    <property type="match status" value="1"/>
</dbReference>
<dbReference type="Gene3D" id="1.20.1440.120">
    <property type="entry name" value="Recombination protein O, C-terminal domain"/>
    <property type="match status" value="1"/>
</dbReference>
<dbReference type="HAMAP" id="MF_00201">
    <property type="entry name" value="RecO"/>
    <property type="match status" value="1"/>
</dbReference>
<dbReference type="InterPro" id="IPR037278">
    <property type="entry name" value="ARFGAP/RecO"/>
</dbReference>
<dbReference type="InterPro" id="IPR022572">
    <property type="entry name" value="DNA_rep/recomb_RecO_N"/>
</dbReference>
<dbReference type="InterPro" id="IPR012340">
    <property type="entry name" value="NA-bd_OB-fold"/>
</dbReference>
<dbReference type="InterPro" id="IPR003717">
    <property type="entry name" value="RecO"/>
</dbReference>
<dbReference type="InterPro" id="IPR042242">
    <property type="entry name" value="RecO_C"/>
</dbReference>
<dbReference type="NCBIfam" id="TIGR00613">
    <property type="entry name" value="reco"/>
    <property type="match status" value="1"/>
</dbReference>
<dbReference type="PANTHER" id="PTHR33991">
    <property type="entry name" value="DNA REPAIR PROTEIN RECO"/>
    <property type="match status" value="1"/>
</dbReference>
<dbReference type="PANTHER" id="PTHR33991:SF1">
    <property type="entry name" value="DNA REPAIR PROTEIN RECO"/>
    <property type="match status" value="1"/>
</dbReference>
<dbReference type="Pfam" id="PF02565">
    <property type="entry name" value="RecO_C"/>
    <property type="match status" value="1"/>
</dbReference>
<dbReference type="Pfam" id="PF11967">
    <property type="entry name" value="RecO_N"/>
    <property type="match status" value="1"/>
</dbReference>
<dbReference type="SUPFAM" id="SSF57863">
    <property type="entry name" value="ArfGap/RecO-like zinc finger"/>
    <property type="match status" value="1"/>
</dbReference>
<dbReference type="SUPFAM" id="SSF50249">
    <property type="entry name" value="Nucleic acid-binding proteins"/>
    <property type="match status" value="1"/>
</dbReference>
<gene>
    <name evidence="1" type="primary">recO</name>
    <name type="ordered locus">HDEF_0534</name>
</gene>
<name>RECO_HAMD5</name>
<comment type="function">
    <text evidence="1">Involved in DNA repair and RecF pathway recombination.</text>
</comment>
<comment type="similarity">
    <text evidence="1">Belongs to the RecO family.</text>
</comment>
<accession>C4K3Z5</accession>